<reference key="1">
    <citation type="journal article" date="2001" name="Nature">
        <title>Complete genome sequence of a multiple drug resistant Salmonella enterica serovar Typhi CT18.</title>
        <authorList>
            <person name="Parkhill J."/>
            <person name="Dougan G."/>
            <person name="James K.D."/>
            <person name="Thomson N.R."/>
            <person name="Pickard D."/>
            <person name="Wain J."/>
            <person name="Churcher C.M."/>
            <person name="Mungall K.L."/>
            <person name="Bentley S.D."/>
            <person name="Holden M.T.G."/>
            <person name="Sebaihia M."/>
            <person name="Baker S."/>
            <person name="Basham D."/>
            <person name="Brooks K."/>
            <person name="Chillingworth T."/>
            <person name="Connerton P."/>
            <person name="Cronin A."/>
            <person name="Davis P."/>
            <person name="Davies R.M."/>
            <person name="Dowd L."/>
            <person name="White N."/>
            <person name="Farrar J."/>
            <person name="Feltwell T."/>
            <person name="Hamlin N."/>
            <person name="Haque A."/>
            <person name="Hien T.T."/>
            <person name="Holroyd S."/>
            <person name="Jagels K."/>
            <person name="Krogh A."/>
            <person name="Larsen T.S."/>
            <person name="Leather S."/>
            <person name="Moule S."/>
            <person name="O'Gaora P."/>
            <person name="Parry C."/>
            <person name="Quail M.A."/>
            <person name="Rutherford K.M."/>
            <person name="Simmonds M."/>
            <person name="Skelton J."/>
            <person name="Stevens K."/>
            <person name="Whitehead S."/>
            <person name="Barrell B.G."/>
        </authorList>
    </citation>
    <scope>NUCLEOTIDE SEQUENCE [LARGE SCALE GENOMIC DNA]</scope>
    <source>
        <strain>CT18</strain>
    </source>
</reference>
<reference key="2">
    <citation type="journal article" date="2003" name="J. Bacteriol.">
        <title>Comparative genomics of Salmonella enterica serovar Typhi strains Ty2 and CT18.</title>
        <authorList>
            <person name="Deng W."/>
            <person name="Liou S.-R."/>
            <person name="Plunkett G. III"/>
            <person name="Mayhew G.F."/>
            <person name="Rose D.J."/>
            <person name="Burland V."/>
            <person name="Kodoyianni V."/>
            <person name="Schwartz D.C."/>
            <person name="Blattner F.R."/>
        </authorList>
    </citation>
    <scope>NUCLEOTIDE SEQUENCE [LARGE SCALE GENOMIC DNA]</scope>
    <source>
        <strain>ATCC 700931 / Ty2</strain>
    </source>
</reference>
<dbReference type="EMBL" id="AL513382">
    <property type="protein sequence ID" value="CAD08005.1"/>
    <property type="molecule type" value="Genomic_DNA"/>
</dbReference>
<dbReference type="EMBL" id="AE014613">
    <property type="protein sequence ID" value="AAO71372.1"/>
    <property type="molecule type" value="Genomic_DNA"/>
</dbReference>
<dbReference type="RefSeq" id="NP_458300.1">
    <property type="nucleotide sequence ID" value="NC_003198.1"/>
</dbReference>
<dbReference type="RefSeq" id="WP_000996130.1">
    <property type="nucleotide sequence ID" value="NZ_WSUR01000001.1"/>
</dbReference>
<dbReference type="SMR" id="Q8Z292"/>
<dbReference type="STRING" id="220341.gene:17588018"/>
<dbReference type="KEGG" id="stt:t3897"/>
<dbReference type="KEGG" id="sty:STY4180"/>
<dbReference type="PATRIC" id="fig|220341.7.peg.4269"/>
<dbReference type="eggNOG" id="COG1192">
    <property type="taxonomic scope" value="Bacteria"/>
</dbReference>
<dbReference type="HOGENOM" id="CLU_037612_7_1_6"/>
<dbReference type="OMA" id="VVHRDEA"/>
<dbReference type="OrthoDB" id="5288747at2"/>
<dbReference type="Proteomes" id="UP000000541">
    <property type="component" value="Chromosome"/>
</dbReference>
<dbReference type="Proteomes" id="UP000002670">
    <property type="component" value="Chromosome"/>
</dbReference>
<dbReference type="GO" id="GO:0009898">
    <property type="term" value="C:cytoplasmic side of plasma membrane"/>
    <property type="evidence" value="ECO:0007669"/>
    <property type="project" value="TreeGrafter"/>
</dbReference>
<dbReference type="GO" id="GO:0005829">
    <property type="term" value="C:cytosol"/>
    <property type="evidence" value="ECO:0007669"/>
    <property type="project" value="TreeGrafter"/>
</dbReference>
<dbReference type="GO" id="GO:0005524">
    <property type="term" value="F:ATP binding"/>
    <property type="evidence" value="ECO:0007669"/>
    <property type="project" value="UniProtKB-KW"/>
</dbReference>
<dbReference type="GO" id="GO:0016887">
    <property type="term" value="F:ATP hydrolysis activity"/>
    <property type="evidence" value="ECO:0007669"/>
    <property type="project" value="TreeGrafter"/>
</dbReference>
<dbReference type="GO" id="GO:0051782">
    <property type="term" value="P:negative regulation of cell division"/>
    <property type="evidence" value="ECO:0007669"/>
    <property type="project" value="TreeGrafter"/>
</dbReference>
<dbReference type="Gene3D" id="3.40.50.300">
    <property type="entry name" value="P-loop containing nucleotide triphosphate hydrolases"/>
    <property type="match status" value="1"/>
</dbReference>
<dbReference type="InterPro" id="IPR017746">
    <property type="entry name" value="Cellulose_synthase_operon_BcsQ"/>
</dbReference>
<dbReference type="InterPro" id="IPR027417">
    <property type="entry name" value="P-loop_NTPase"/>
</dbReference>
<dbReference type="InterPro" id="IPR050625">
    <property type="entry name" value="ParA/MinD_ATPase"/>
</dbReference>
<dbReference type="NCBIfam" id="TIGR03371">
    <property type="entry name" value="cellulose_yhjQ"/>
    <property type="match status" value="1"/>
</dbReference>
<dbReference type="NCBIfam" id="NF007460">
    <property type="entry name" value="PRK10037.1"/>
    <property type="match status" value="1"/>
</dbReference>
<dbReference type="PANTHER" id="PTHR43384:SF4">
    <property type="entry name" value="CELLULOSE BIOSYNTHESIS PROTEIN BCSQ-RELATED"/>
    <property type="match status" value="1"/>
</dbReference>
<dbReference type="PANTHER" id="PTHR43384">
    <property type="entry name" value="SEPTUM SITE-DETERMINING PROTEIN MIND HOMOLOG, CHLOROPLASTIC-RELATED"/>
    <property type="match status" value="1"/>
</dbReference>
<dbReference type="Pfam" id="PF06564">
    <property type="entry name" value="CBP_BcsQ"/>
    <property type="match status" value="1"/>
</dbReference>
<dbReference type="SUPFAM" id="SSF52540">
    <property type="entry name" value="P-loop containing nucleoside triphosphate hydrolases"/>
    <property type="match status" value="1"/>
</dbReference>
<organism>
    <name type="scientific">Salmonella typhi</name>
    <dbReference type="NCBI Taxonomy" id="90370"/>
    <lineage>
        <taxon>Bacteria</taxon>
        <taxon>Pseudomonadati</taxon>
        <taxon>Pseudomonadota</taxon>
        <taxon>Gammaproteobacteria</taxon>
        <taxon>Enterobacterales</taxon>
        <taxon>Enterobacteriaceae</taxon>
        <taxon>Salmonella</taxon>
    </lineage>
</organism>
<comment type="function">
    <text evidence="1">Essential for cellulose biosynthesis. May play a role in subcellular localization of an active cellulose biosynthesis apparatus at the bacterial cell pole (By similarity).</text>
</comment>
<comment type="subcellular location">
    <subcellularLocation>
        <location evidence="1">Cytoplasm</location>
    </subcellularLocation>
    <text evidence="1">Localizes at the cell pole.</text>
</comment>
<comment type="similarity">
    <text evidence="3">Belongs to the BcsQ family.</text>
</comment>
<name>BCSQ_SALTI</name>
<sequence>MAILGLQGVRGGVGTTSLTAALAWALQILGENVLVIDASPDNLLRMSFNVDFVHQGGWARSLLDGQDWRDAGLRYTSQLDLLPFGQLTSQEWENPQAWQETLGEIGSAIQALKASGRYSWILLDLPYGESPLTRQLVSLCDHTLAIAQVDANCHIRLHQQALPAGAHILINDLRIGSQLQDDLYQVWLQSQRRLLPIVIHRDEAMAECMASKQPLGEYRSDSLAAEEVLTLANWCLLHDAGDKTSAGSLR</sequence>
<proteinExistence type="inferred from homology"/>
<gene>
    <name type="primary">bcsQ</name>
    <name type="ordered locus">STY4180</name>
    <name type="ordered locus">t3897</name>
</gene>
<keyword id="KW-0067">ATP-binding</keyword>
<keyword id="KW-0963">Cytoplasm</keyword>
<keyword id="KW-0547">Nucleotide-binding</keyword>
<evidence type="ECO:0000250" key="1"/>
<evidence type="ECO:0000255" key="2"/>
<evidence type="ECO:0000305" key="3"/>
<protein>
    <recommendedName>
        <fullName>Cellulose biosynthesis protein BcsQ</fullName>
    </recommendedName>
</protein>
<feature type="chain" id="PRO_0000169576" description="Cellulose biosynthesis protein BcsQ">
    <location>
        <begin position="1"/>
        <end position="250"/>
    </location>
</feature>
<feature type="binding site" evidence="2">
    <location>
        <begin position="9"/>
        <end position="16"/>
    </location>
    <ligand>
        <name>ATP</name>
        <dbReference type="ChEBI" id="CHEBI:30616"/>
    </ligand>
</feature>
<accession>Q8Z292</accession>